<organism>
    <name type="scientific">Candida maltosa</name>
    <name type="common">Yeast</name>
    <dbReference type="NCBI Taxonomy" id="5479"/>
    <lineage>
        <taxon>Eukaryota</taxon>
        <taxon>Fungi</taxon>
        <taxon>Dikarya</taxon>
        <taxon>Ascomycota</taxon>
        <taxon>Saccharomycotina</taxon>
        <taxon>Pichiomycetes</taxon>
        <taxon>Debaryomycetaceae</taxon>
        <taxon>Candida/Lodderomyces clade</taxon>
        <taxon>Candida</taxon>
    </lineage>
</organism>
<comment type="subcellular location">
    <subcellularLocation>
        <location evidence="4">Cell membrane</location>
        <topology evidence="4">Lipid-anchor</topology>
        <topology evidence="4">GPI-anchor</topology>
    </subcellularLocation>
</comment>
<comment type="similarity">
    <text evidence="4">Belongs to the glycosyl hydrolase 72 family.</text>
</comment>
<feature type="signal peptide" evidence="2">
    <location>
        <begin position="1"/>
        <end position="20"/>
    </location>
</feature>
<feature type="chain" id="PRO_0000010489" description="Protein EPD2">
    <location>
        <begin position="21"/>
        <end status="unknown"/>
    </location>
</feature>
<feature type="propeptide" id="PRO_0000010490" description="Removed in mature form" evidence="2">
    <location>
        <begin status="unknown"/>
        <end position="549"/>
    </location>
</feature>
<feature type="region of interest" description="Disordered" evidence="3">
    <location>
        <begin position="470"/>
        <end position="518"/>
    </location>
</feature>
<feature type="compositionally biased region" description="Low complexity" evidence="3">
    <location>
        <begin position="484"/>
        <end position="514"/>
    </location>
</feature>
<feature type="glycosylation site" description="N-linked (GlcNAc...) asparagine" evidence="2">
    <location>
        <position position="41"/>
    </location>
</feature>
<feature type="glycosylation site" description="N-linked (GlcNAc...) asparagine" evidence="2">
    <location>
        <position position="173"/>
    </location>
</feature>
<feature type="glycosylation site" description="N-linked (GlcNAc...) asparagine" evidence="2">
    <location>
        <position position="261"/>
    </location>
</feature>
<feature type="glycosylation site" description="N-linked (GlcNAc...) asparagine" evidence="2">
    <location>
        <position position="467"/>
    </location>
</feature>
<feature type="disulfide bond" evidence="1">
    <location>
        <begin position="82"/>
        <end position="111"/>
    </location>
</feature>
<feature type="disulfide bond" evidence="1">
    <location>
        <begin position="224"/>
        <end position="358"/>
    </location>
</feature>
<feature type="disulfide bond" evidence="1">
    <location>
        <begin position="242"/>
        <end position="273"/>
    </location>
</feature>
<feature type="disulfide bond" evidence="1">
    <location>
        <begin position="381"/>
        <end position="432"/>
    </location>
</feature>
<feature type="disulfide bond" evidence="1">
    <location>
        <begin position="390"/>
        <end position="456"/>
    </location>
</feature>
<feature type="disulfide bond" evidence="1">
    <location>
        <begin position="409"/>
        <end position="414"/>
    </location>
</feature>
<reference key="1">
    <citation type="journal article" date="2000" name="Biosci. Biotechnol. Biochem.">
        <title>Cloning and characterization of EPD2, a gene required for efficient pseudohyphal formation of a dimorphic yeast, Candida maltosa.</title>
        <authorList>
            <person name="Nakazawa T."/>
            <person name="Takahashi M."/>
            <person name="Horiuchi H."/>
            <person name="Ohta A."/>
            <person name="Takagi M."/>
        </authorList>
    </citation>
    <scope>NUCLEOTIDE SEQUENCE [GENOMIC DNA]</scope>
    <source>
        <strain>ATCC 28140 / CBS 5611 / IAM 12247 / JCM 1504 / NBRC 1977</strain>
    </source>
</reference>
<proteinExistence type="inferred from homology"/>
<sequence length="549" mass="60094">MISVIKSLLTLSVLSTLAAAKFESATPPIEVVGNKFYYSNNGTQFLLRGIAYQQDTSGSVSNGYDSDPNRKYNDPLADADACKRDVQYFIDTNTNTLRVYGIDPDKDHEECMKIFSDAGIYVIADLSEPTVSVNRINPEWNLDLYERYTKVIDNMQEYSNVLGFFAGNEVTNNRTNTDASPFVKAAVRDMKKYIKDNDYRTIPVGYSSNDDEDTRVAIADYFACGSLDDRADFFGINMYEWCGRSTFATSGYKDRTEDFKNLTIPIFFSEYGCNEVSPRVFQEVGTLYSDQMTDVWSGGIVYMYYEEANHYGLVSLNGDRVSTLADYNNYKSAIKSISPSLARRSTIQSEDSTKTMACPDNSHSTWRASTELPPTPDEEFCDCISQSFNCVVADDVDAEDYSTLFGEVCGYIDCGDISANGNTGEYGGFSFCSDKDRLSYVLNQYYHDQNERADACDFAGSASINDNASASTSCSAAGGRGLQSGRRSSTTRGGSSSSRSSSSSSSSSTGSGSSNAGIKVGGGQMSTVKLITITTIVTAFVGGLSIIFY</sequence>
<protein>
    <recommendedName>
        <fullName>Protein EPD2</fullName>
    </recommendedName>
    <alternativeName>
        <fullName>Essential for pseudohyphal development 2</fullName>
    </alternativeName>
</protein>
<keyword id="KW-1003">Cell membrane</keyword>
<keyword id="KW-1015">Disulfide bond</keyword>
<keyword id="KW-0325">Glycoprotein</keyword>
<keyword id="KW-0336">GPI-anchor</keyword>
<keyword id="KW-0449">Lipoprotein</keyword>
<keyword id="KW-0472">Membrane</keyword>
<keyword id="KW-0732">Signal</keyword>
<gene>
    <name type="primary">EPD2</name>
</gene>
<evidence type="ECO:0000250" key="1">
    <source>
        <dbReference type="UniProtKB" id="Q06135"/>
    </source>
</evidence>
<evidence type="ECO:0000255" key="2"/>
<evidence type="ECO:0000256" key="3">
    <source>
        <dbReference type="SAM" id="MobiDB-lite"/>
    </source>
</evidence>
<evidence type="ECO:0000305" key="4"/>
<accession>O74137</accession>
<dbReference type="EMBL" id="AB011286">
    <property type="protein sequence ID" value="BAA32730.1"/>
    <property type="molecule type" value="Genomic_DNA"/>
</dbReference>
<dbReference type="SMR" id="O74137"/>
<dbReference type="CAZy" id="CBM43">
    <property type="family name" value="Carbohydrate-Binding Module Family 43"/>
</dbReference>
<dbReference type="CAZy" id="GH72">
    <property type="family name" value="Glycoside Hydrolase Family 72"/>
</dbReference>
<dbReference type="GlyCosmos" id="O74137">
    <property type="glycosylation" value="4 sites, No reported glycans"/>
</dbReference>
<dbReference type="GO" id="GO:0005886">
    <property type="term" value="C:plasma membrane"/>
    <property type="evidence" value="ECO:0007669"/>
    <property type="project" value="UniProtKB-SubCell"/>
</dbReference>
<dbReference type="GO" id="GO:0098552">
    <property type="term" value="C:side of membrane"/>
    <property type="evidence" value="ECO:0007669"/>
    <property type="project" value="UniProtKB-KW"/>
</dbReference>
<dbReference type="GO" id="GO:0042124">
    <property type="term" value="F:1,3-beta-glucanosyltransferase activity"/>
    <property type="evidence" value="ECO:0007669"/>
    <property type="project" value="TreeGrafter"/>
</dbReference>
<dbReference type="GO" id="GO:0071970">
    <property type="term" value="P:fungal-type cell wall (1-&gt;3)-beta-D-glucan biosynthetic process"/>
    <property type="evidence" value="ECO:0007669"/>
    <property type="project" value="TreeGrafter"/>
</dbReference>
<dbReference type="GO" id="GO:0031505">
    <property type="term" value="P:fungal-type cell wall organization"/>
    <property type="evidence" value="ECO:0007669"/>
    <property type="project" value="TreeGrafter"/>
</dbReference>
<dbReference type="FunFam" id="3.20.20.80:FF:000038">
    <property type="entry name" value="1,3-beta-glucanosyltransferase"/>
    <property type="match status" value="1"/>
</dbReference>
<dbReference type="Gene3D" id="1.20.58.1040">
    <property type="match status" value="1"/>
</dbReference>
<dbReference type="Gene3D" id="3.20.20.80">
    <property type="entry name" value="Glycosidases"/>
    <property type="match status" value="1"/>
</dbReference>
<dbReference type="InterPro" id="IPR004886">
    <property type="entry name" value="Glucanosyltransferase"/>
</dbReference>
<dbReference type="InterPro" id="IPR017853">
    <property type="entry name" value="Glycoside_hydrolase_SF"/>
</dbReference>
<dbReference type="InterPro" id="IPR012946">
    <property type="entry name" value="X8"/>
</dbReference>
<dbReference type="PANTHER" id="PTHR31468">
    <property type="entry name" value="1,3-BETA-GLUCANOSYLTRANSFERASE GAS1"/>
    <property type="match status" value="1"/>
</dbReference>
<dbReference type="PANTHER" id="PTHR31468:SF2">
    <property type="entry name" value="1,3-BETA-GLUCANOSYLTRANSFERASE GAS1"/>
    <property type="match status" value="1"/>
</dbReference>
<dbReference type="Pfam" id="PF03198">
    <property type="entry name" value="Glyco_hydro_72"/>
    <property type="match status" value="1"/>
</dbReference>
<dbReference type="Pfam" id="PF07983">
    <property type="entry name" value="X8"/>
    <property type="match status" value="1"/>
</dbReference>
<dbReference type="SMART" id="SM00768">
    <property type="entry name" value="X8"/>
    <property type="match status" value="1"/>
</dbReference>
<dbReference type="SUPFAM" id="SSF51445">
    <property type="entry name" value="(Trans)glycosidases"/>
    <property type="match status" value="1"/>
</dbReference>
<name>EPD2_CANMA</name>